<comment type="function">
    <text evidence="1">Catalyzes the esterification, concomitant with transport, of exogenous long-chain fatty acids into metabolically active CoA thioesters for subsequent degradation or incorporation into phospholipids.</text>
</comment>
<comment type="catalytic activity">
    <reaction evidence="1">
        <text>a long-chain fatty acid + ATP + CoA = a long-chain fatty acyl-CoA + AMP + diphosphate</text>
        <dbReference type="Rhea" id="RHEA:15421"/>
        <dbReference type="ChEBI" id="CHEBI:30616"/>
        <dbReference type="ChEBI" id="CHEBI:33019"/>
        <dbReference type="ChEBI" id="CHEBI:57287"/>
        <dbReference type="ChEBI" id="CHEBI:57560"/>
        <dbReference type="ChEBI" id="CHEBI:83139"/>
        <dbReference type="ChEBI" id="CHEBI:456215"/>
        <dbReference type="EC" id="6.2.1.3"/>
    </reaction>
</comment>
<comment type="cofactor">
    <cofactor evidence="1">
        <name>Mg(2+)</name>
        <dbReference type="ChEBI" id="CHEBI:18420"/>
    </cofactor>
</comment>
<comment type="pathway">
    <text evidence="1">Lipid metabolism; fatty acid beta-oxidation.</text>
</comment>
<comment type="subcellular location">
    <subcellularLocation>
        <location evidence="2">Membrane</location>
        <topology evidence="2">Peripheral membrane protein</topology>
    </subcellularLocation>
    <text evidence="2">Partially membrane-associated.</text>
</comment>
<comment type="similarity">
    <text evidence="2">Belongs to the ATP-dependent AMP-binding enzyme family.</text>
</comment>
<comment type="sequence caution" evidence="2">
    <conflict type="erroneous initiation">
        <sequence resource="EMBL-CDS" id="AAM85796"/>
    </conflict>
</comment>
<comment type="sequence caution" evidence="2">
    <conflict type="erroneous initiation">
        <sequence resource="EMBL-CDS" id="AAS62135"/>
    </conflict>
</comment>
<reference key="1">
    <citation type="journal article" date="2001" name="Nature">
        <title>Genome sequence of Yersinia pestis, the causative agent of plague.</title>
        <authorList>
            <person name="Parkhill J."/>
            <person name="Wren B.W."/>
            <person name="Thomson N.R."/>
            <person name="Titball R.W."/>
            <person name="Holden M.T.G."/>
            <person name="Prentice M.B."/>
            <person name="Sebaihia M."/>
            <person name="James K.D."/>
            <person name="Churcher C.M."/>
            <person name="Mungall K.L."/>
            <person name="Baker S."/>
            <person name="Basham D."/>
            <person name="Bentley S.D."/>
            <person name="Brooks K."/>
            <person name="Cerdeno-Tarraga A.-M."/>
            <person name="Chillingworth T."/>
            <person name="Cronin A."/>
            <person name="Davies R.M."/>
            <person name="Davis P."/>
            <person name="Dougan G."/>
            <person name="Feltwell T."/>
            <person name="Hamlin N."/>
            <person name="Holroyd S."/>
            <person name="Jagels K."/>
            <person name="Karlyshev A.V."/>
            <person name="Leather S."/>
            <person name="Moule S."/>
            <person name="Oyston P.C.F."/>
            <person name="Quail M.A."/>
            <person name="Rutherford K.M."/>
            <person name="Simmonds M."/>
            <person name="Skelton J."/>
            <person name="Stevens K."/>
            <person name="Whitehead S."/>
            <person name="Barrell B.G."/>
        </authorList>
    </citation>
    <scope>NUCLEOTIDE SEQUENCE [LARGE SCALE GENOMIC DNA]</scope>
    <source>
        <strain>CO-92 / Biovar Orientalis</strain>
    </source>
</reference>
<reference key="2">
    <citation type="journal article" date="2002" name="J. Bacteriol.">
        <title>Genome sequence of Yersinia pestis KIM.</title>
        <authorList>
            <person name="Deng W."/>
            <person name="Burland V."/>
            <person name="Plunkett G. III"/>
            <person name="Boutin A."/>
            <person name="Mayhew G.F."/>
            <person name="Liss P."/>
            <person name="Perna N.T."/>
            <person name="Rose D.J."/>
            <person name="Mau B."/>
            <person name="Zhou S."/>
            <person name="Schwartz D.C."/>
            <person name="Fetherston J.D."/>
            <person name="Lindler L.E."/>
            <person name="Brubaker R.R."/>
            <person name="Plano G.V."/>
            <person name="Straley S.C."/>
            <person name="McDonough K.A."/>
            <person name="Nilles M.L."/>
            <person name="Matson J.S."/>
            <person name="Blattner F.R."/>
            <person name="Perry R.D."/>
        </authorList>
    </citation>
    <scope>NUCLEOTIDE SEQUENCE [LARGE SCALE GENOMIC DNA]</scope>
    <source>
        <strain>KIM10+ / Biovar Mediaevalis</strain>
    </source>
</reference>
<reference key="3">
    <citation type="journal article" date="2004" name="DNA Res.">
        <title>Complete genome sequence of Yersinia pestis strain 91001, an isolate avirulent to humans.</title>
        <authorList>
            <person name="Song Y."/>
            <person name="Tong Z."/>
            <person name="Wang J."/>
            <person name="Wang L."/>
            <person name="Guo Z."/>
            <person name="Han Y."/>
            <person name="Zhang J."/>
            <person name="Pei D."/>
            <person name="Zhou D."/>
            <person name="Qin H."/>
            <person name="Pang X."/>
            <person name="Han Y."/>
            <person name="Zhai J."/>
            <person name="Li M."/>
            <person name="Cui B."/>
            <person name="Qi Z."/>
            <person name="Jin L."/>
            <person name="Dai R."/>
            <person name="Chen F."/>
            <person name="Li S."/>
            <person name="Ye C."/>
            <person name="Du Z."/>
            <person name="Lin W."/>
            <person name="Wang J."/>
            <person name="Yu J."/>
            <person name="Yang H."/>
            <person name="Wang J."/>
            <person name="Huang P."/>
            <person name="Yang R."/>
        </authorList>
    </citation>
    <scope>NUCLEOTIDE SEQUENCE [LARGE SCALE GENOMIC DNA]</scope>
    <source>
        <strain>91001 / Biovar Mediaevalis</strain>
    </source>
</reference>
<name>LCFA_YERPE</name>
<sequence length="562" mass="62639">MEKVWLKRYPADVPAEIDPDRYSSLIEMFENAALRYADQPAFINMGEVMTFRKLEERSRAFAAYLQQGLGLQKGDRVALMMPNLLQYPIALFGVLRAGMIVVNVNPLYTPRELEHQLSDSGAVAIVIVSNFAHTLEKVVFKTQVRHVILTRMGDQLSAAKGTLVNFVVKYIKRLVPKYYLPDAISFRTVLQKGRRMQYVKPDVINTDTAFLQYTGGTTGVAKGAILTHRNMQSNLEQAKAAYAPLLQPGRDLVVTALPLYHIFALTVNCLLFIELGGRSLLITNPRDIPGMVKELSRYPFTAITGVNTLFNALLNNEEFTHLDFSTLRLSVGGGMPVQKAVAEKWETLTGKHLLEGYGLTECSPLVTGNPYDLKHYSGSIGLPVPSTDVRLRDDDGNDVELGKPGELWVRGPQVMLGYWQRPDATDDVLKDGWLATGDIATMDEDGFLRIVDRKKDMILVSGFNVYPNEIEEVVALHAKVLESAVIGVPNEVSGEAVKVFVVKNDASLTPEELLTHCRRYLTGYKVPKIVEFRDELPKSNVGKILRRELRDEEVKVGTTDAA</sequence>
<gene>
    <name type="primary">fadD</name>
    <name type="ordered locus">YPO2074</name>
    <name type="ordered locus">y2236</name>
    <name type="ordered locus">YP_1917</name>
</gene>
<accession>Q8ZES9</accession>
<accession>Q0WF82</accession>
<dbReference type="EC" id="6.2.1.3" evidence="1"/>
<dbReference type="EMBL" id="AL590842">
    <property type="protein sequence ID" value="CAL20709.1"/>
    <property type="molecule type" value="Genomic_DNA"/>
</dbReference>
<dbReference type="EMBL" id="AE009952">
    <property type="protein sequence ID" value="AAM85796.1"/>
    <property type="status" value="ALT_INIT"/>
    <property type="molecule type" value="Genomic_DNA"/>
</dbReference>
<dbReference type="EMBL" id="AE017042">
    <property type="protein sequence ID" value="AAS62135.1"/>
    <property type="status" value="ALT_INIT"/>
    <property type="molecule type" value="Genomic_DNA"/>
</dbReference>
<dbReference type="PIR" id="AB0253">
    <property type="entry name" value="AB0253"/>
</dbReference>
<dbReference type="RefSeq" id="WP_002211182.1">
    <property type="nucleotide sequence ID" value="NZ_WHKM01000054.1"/>
</dbReference>
<dbReference type="RefSeq" id="YP_002347056.1">
    <property type="nucleotide sequence ID" value="NC_003143.1"/>
</dbReference>
<dbReference type="SMR" id="Q8ZES9"/>
<dbReference type="STRING" id="214092.YPO2074"/>
<dbReference type="PaxDb" id="214092-YPO2074"/>
<dbReference type="DNASU" id="1147183"/>
<dbReference type="EnsemblBacteria" id="AAS62135">
    <property type="protein sequence ID" value="AAS62135"/>
    <property type="gene ID" value="YP_1917"/>
</dbReference>
<dbReference type="GeneID" id="57976587"/>
<dbReference type="KEGG" id="ype:YPO2074"/>
<dbReference type="KEGG" id="ypk:y2236"/>
<dbReference type="KEGG" id="ypm:YP_1917"/>
<dbReference type="PATRIC" id="fig|1028802.3.peg.2"/>
<dbReference type="eggNOG" id="COG0318">
    <property type="taxonomic scope" value="Bacteria"/>
</dbReference>
<dbReference type="HOGENOM" id="CLU_000022_59_9_6"/>
<dbReference type="OMA" id="ICCRGYN"/>
<dbReference type="OrthoDB" id="9803968at2"/>
<dbReference type="UniPathway" id="UPA00659"/>
<dbReference type="Proteomes" id="UP000000815">
    <property type="component" value="Chromosome"/>
</dbReference>
<dbReference type="Proteomes" id="UP000001019">
    <property type="component" value="Chromosome"/>
</dbReference>
<dbReference type="Proteomes" id="UP000002490">
    <property type="component" value="Chromosome"/>
</dbReference>
<dbReference type="GO" id="GO:0016020">
    <property type="term" value="C:membrane"/>
    <property type="evidence" value="ECO:0007669"/>
    <property type="project" value="UniProtKB-SubCell"/>
</dbReference>
<dbReference type="GO" id="GO:0005524">
    <property type="term" value="F:ATP binding"/>
    <property type="evidence" value="ECO:0007669"/>
    <property type="project" value="UniProtKB-KW"/>
</dbReference>
<dbReference type="GO" id="GO:0004467">
    <property type="term" value="F:long-chain fatty acid-CoA ligase activity"/>
    <property type="evidence" value="ECO:0007669"/>
    <property type="project" value="UniProtKB-EC"/>
</dbReference>
<dbReference type="GO" id="GO:0006635">
    <property type="term" value="P:fatty acid beta-oxidation"/>
    <property type="evidence" value="ECO:0007669"/>
    <property type="project" value="UniProtKB-UniPathway"/>
</dbReference>
<dbReference type="CDD" id="cd05936">
    <property type="entry name" value="FC-FACS_FadD_like"/>
    <property type="match status" value="1"/>
</dbReference>
<dbReference type="FunFam" id="3.30.300.30:FF:000006">
    <property type="entry name" value="Long-chain-fatty-acid--CoA ligase FadD"/>
    <property type="match status" value="1"/>
</dbReference>
<dbReference type="FunFam" id="3.40.50.12780:FF:000003">
    <property type="entry name" value="Long-chain-fatty-acid--CoA ligase FadD"/>
    <property type="match status" value="1"/>
</dbReference>
<dbReference type="Gene3D" id="3.30.300.30">
    <property type="match status" value="1"/>
</dbReference>
<dbReference type="Gene3D" id="3.40.50.12780">
    <property type="entry name" value="N-terminal domain of ligase-like"/>
    <property type="match status" value="1"/>
</dbReference>
<dbReference type="InterPro" id="IPR025110">
    <property type="entry name" value="AMP-bd_C"/>
</dbReference>
<dbReference type="InterPro" id="IPR045851">
    <property type="entry name" value="AMP-bd_C_sf"/>
</dbReference>
<dbReference type="InterPro" id="IPR020845">
    <property type="entry name" value="AMP-binding_CS"/>
</dbReference>
<dbReference type="InterPro" id="IPR000873">
    <property type="entry name" value="AMP-dep_synth/lig_dom"/>
</dbReference>
<dbReference type="InterPro" id="IPR042099">
    <property type="entry name" value="ANL_N_sf"/>
</dbReference>
<dbReference type="InterPro" id="IPR050237">
    <property type="entry name" value="ATP-dep_AMP-bd_enzyme"/>
</dbReference>
<dbReference type="NCBIfam" id="NF006523">
    <property type="entry name" value="PRK08974.1"/>
    <property type="match status" value="1"/>
</dbReference>
<dbReference type="PANTHER" id="PTHR43767">
    <property type="entry name" value="LONG-CHAIN-FATTY-ACID--COA LIGASE"/>
    <property type="match status" value="1"/>
</dbReference>
<dbReference type="PANTHER" id="PTHR43767:SF8">
    <property type="entry name" value="LONG-CHAIN-FATTY-ACID--COA LIGASE"/>
    <property type="match status" value="1"/>
</dbReference>
<dbReference type="Pfam" id="PF00501">
    <property type="entry name" value="AMP-binding"/>
    <property type="match status" value="1"/>
</dbReference>
<dbReference type="Pfam" id="PF13193">
    <property type="entry name" value="AMP-binding_C"/>
    <property type="match status" value="1"/>
</dbReference>
<dbReference type="SUPFAM" id="SSF56801">
    <property type="entry name" value="Acetyl-CoA synthetase-like"/>
    <property type="match status" value="1"/>
</dbReference>
<dbReference type="PROSITE" id="PS00455">
    <property type="entry name" value="AMP_BINDING"/>
    <property type="match status" value="1"/>
</dbReference>
<feature type="chain" id="PRO_0000193130" description="Long-chain-fatty-acid--CoA ligase">
    <location>
        <begin position="1"/>
        <end position="562"/>
    </location>
</feature>
<feature type="binding site" evidence="2">
    <location>
        <begin position="213"/>
        <end position="224"/>
    </location>
    <ligand>
        <name>ATP</name>
        <dbReference type="ChEBI" id="CHEBI:30616"/>
    </ligand>
</feature>
<feature type="sequence variant" description="In strain: KIM5 and 91001.">
    <original>N</original>
    <variation>K</variation>
    <location>
        <position position="504"/>
    </location>
</feature>
<proteinExistence type="inferred from homology"/>
<evidence type="ECO:0000250" key="1">
    <source>
        <dbReference type="UniProtKB" id="P69451"/>
    </source>
</evidence>
<evidence type="ECO:0000305" key="2"/>
<organism>
    <name type="scientific">Yersinia pestis</name>
    <dbReference type="NCBI Taxonomy" id="632"/>
    <lineage>
        <taxon>Bacteria</taxon>
        <taxon>Pseudomonadati</taxon>
        <taxon>Pseudomonadota</taxon>
        <taxon>Gammaproteobacteria</taxon>
        <taxon>Enterobacterales</taxon>
        <taxon>Yersiniaceae</taxon>
        <taxon>Yersinia</taxon>
    </lineage>
</organism>
<keyword id="KW-0067">ATP-binding</keyword>
<keyword id="KW-0276">Fatty acid metabolism</keyword>
<keyword id="KW-0436">Ligase</keyword>
<keyword id="KW-0443">Lipid metabolism</keyword>
<keyword id="KW-0460">Magnesium</keyword>
<keyword id="KW-0472">Membrane</keyword>
<keyword id="KW-0547">Nucleotide-binding</keyword>
<keyword id="KW-1185">Reference proteome</keyword>
<protein>
    <recommendedName>
        <fullName>Long-chain-fatty-acid--CoA ligase</fullName>
        <ecNumber evidence="1">6.2.1.3</ecNumber>
    </recommendedName>
    <alternativeName>
        <fullName>Long-chain acyl-CoA synthetase</fullName>
    </alternativeName>
</protein>